<reference key="1">
    <citation type="submission" date="2006-08" db="EMBL/GenBank/DDBJ databases">
        <title>Complete sequence of Shewanella frigidimarina NCIMB 400.</title>
        <authorList>
            <consortium name="US DOE Joint Genome Institute"/>
            <person name="Copeland A."/>
            <person name="Lucas S."/>
            <person name="Lapidus A."/>
            <person name="Barry K."/>
            <person name="Detter J.C."/>
            <person name="Glavina del Rio T."/>
            <person name="Hammon N."/>
            <person name="Israni S."/>
            <person name="Dalin E."/>
            <person name="Tice H."/>
            <person name="Pitluck S."/>
            <person name="Fredrickson J.K."/>
            <person name="Kolker E."/>
            <person name="McCuel L.A."/>
            <person name="DiChristina T."/>
            <person name="Nealson K.H."/>
            <person name="Newman D."/>
            <person name="Tiedje J.M."/>
            <person name="Zhou J."/>
            <person name="Romine M.F."/>
            <person name="Culley D.E."/>
            <person name="Serres M."/>
            <person name="Chertkov O."/>
            <person name="Brettin T."/>
            <person name="Bruce D."/>
            <person name="Han C."/>
            <person name="Tapia R."/>
            <person name="Gilna P."/>
            <person name="Schmutz J."/>
            <person name="Larimer F."/>
            <person name="Land M."/>
            <person name="Hauser L."/>
            <person name="Kyrpides N."/>
            <person name="Mikhailova N."/>
            <person name="Richardson P."/>
        </authorList>
    </citation>
    <scope>NUCLEOTIDE SEQUENCE [LARGE SCALE GENOMIC DNA]</scope>
    <source>
        <strain>NCIMB 400</strain>
    </source>
</reference>
<accession>Q080S4</accession>
<comment type="function">
    <text evidence="1">Part of the ABC transporter complex LolCDE involved in the translocation of mature outer membrane-directed lipoproteins, from the inner membrane to the periplasmic chaperone, LolA. Responsible for the formation of the LolA-lipoprotein complex in an ATP-dependent manner.</text>
</comment>
<comment type="subunit">
    <text evidence="1">The complex is composed of two ATP-binding proteins (LolD) and two transmembrane proteins (LolC and LolE).</text>
</comment>
<comment type="subcellular location">
    <subcellularLocation>
        <location evidence="1">Cell inner membrane</location>
        <topology evidence="1">Peripheral membrane protein</topology>
    </subcellularLocation>
</comment>
<comment type="similarity">
    <text evidence="1">Belongs to the ABC transporter superfamily. Lipoprotein translocase (TC 3.A.1.125) family.</text>
</comment>
<name>LOLD_SHEFN</name>
<organism>
    <name type="scientific">Shewanella frigidimarina (strain NCIMB 400)</name>
    <dbReference type="NCBI Taxonomy" id="318167"/>
    <lineage>
        <taxon>Bacteria</taxon>
        <taxon>Pseudomonadati</taxon>
        <taxon>Pseudomonadota</taxon>
        <taxon>Gammaproteobacteria</taxon>
        <taxon>Alteromonadales</taxon>
        <taxon>Shewanellaceae</taxon>
        <taxon>Shewanella</taxon>
    </lineage>
</organism>
<keyword id="KW-0067">ATP-binding</keyword>
<keyword id="KW-0997">Cell inner membrane</keyword>
<keyword id="KW-1003">Cell membrane</keyword>
<keyword id="KW-0472">Membrane</keyword>
<keyword id="KW-0547">Nucleotide-binding</keyword>
<keyword id="KW-1185">Reference proteome</keyword>
<keyword id="KW-1278">Translocase</keyword>
<keyword id="KW-0813">Transport</keyword>
<gene>
    <name evidence="1" type="primary">lolD</name>
    <name type="ordered locus">Sfri_2396</name>
</gene>
<feature type="chain" id="PRO_0000272150" description="Lipoprotein-releasing system ATP-binding protein LolD">
    <location>
        <begin position="1"/>
        <end position="239"/>
    </location>
</feature>
<feature type="domain" description="ABC transporter" evidence="1">
    <location>
        <begin position="9"/>
        <end position="239"/>
    </location>
</feature>
<feature type="binding site" evidence="1">
    <location>
        <begin position="45"/>
        <end position="52"/>
    </location>
    <ligand>
        <name>ATP</name>
        <dbReference type="ChEBI" id="CHEBI:30616"/>
    </ligand>
</feature>
<protein>
    <recommendedName>
        <fullName evidence="1">Lipoprotein-releasing system ATP-binding protein LolD</fullName>
        <ecNumber evidence="1">7.6.2.-</ecNumber>
    </recommendedName>
</protein>
<sequence length="239" mass="25914">MSQTQQALLQVQHVSKHYHDGEVTTQVLSGVDLTVYKGEQLAIVGSSGSGKSTLLHIMGTLDTPTSGTVLLDGEDLYQLSSARQAQIRNQDLGFIYQFHHLLPEFTAIENVAMPAFIQGRDKTQALVDAKNLLERVGLGHRLQHIPAQLSGGERQRVAIARALINKPKLVLADEPTGNLDASSGDNVYAMIRELAQQFGTAFVVVTHDHKLAAKMDRQLTMKDGILQVVAATSPTGLAE</sequence>
<evidence type="ECO:0000255" key="1">
    <source>
        <dbReference type="HAMAP-Rule" id="MF_01708"/>
    </source>
</evidence>
<proteinExistence type="inferred from homology"/>
<dbReference type="EC" id="7.6.2.-" evidence="1"/>
<dbReference type="EMBL" id="CP000447">
    <property type="protein sequence ID" value="ABI72241.1"/>
    <property type="molecule type" value="Genomic_DNA"/>
</dbReference>
<dbReference type="RefSeq" id="WP_011637850.1">
    <property type="nucleotide sequence ID" value="NC_008345.1"/>
</dbReference>
<dbReference type="SMR" id="Q080S4"/>
<dbReference type="STRING" id="318167.Sfri_2396"/>
<dbReference type="KEGG" id="sfr:Sfri_2396"/>
<dbReference type="eggNOG" id="COG1136">
    <property type="taxonomic scope" value="Bacteria"/>
</dbReference>
<dbReference type="HOGENOM" id="CLU_000604_1_22_6"/>
<dbReference type="OrthoDB" id="9801477at2"/>
<dbReference type="Proteomes" id="UP000000684">
    <property type="component" value="Chromosome"/>
</dbReference>
<dbReference type="GO" id="GO:0005886">
    <property type="term" value="C:plasma membrane"/>
    <property type="evidence" value="ECO:0007669"/>
    <property type="project" value="UniProtKB-SubCell"/>
</dbReference>
<dbReference type="GO" id="GO:0005524">
    <property type="term" value="F:ATP binding"/>
    <property type="evidence" value="ECO:0007669"/>
    <property type="project" value="UniProtKB-KW"/>
</dbReference>
<dbReference type="GO" id="GO:0016887">
    <property type="term" value="F:ATP hydrolysis activity"/>
    <property type="evidence" value="ECO:0007669"/>
    <property type="project" value="InterPro"/>
</dbReference>
<dbReference type="GO" id="GO:0022857">
    <property type="term" value="F:transmembrane transporter activity"/>
    <property type="evidence" value="ECO:0007669"/>
    <property type="project" value="TreeGrafter"/>
</dbReference>
<dbReference type="GO" id="GO:0044874">
    <property type="term" value="P:lipoprotein localization to outer membrane"/>
    <property type="evidence" value="ECO:0007669"/>
    <property type="project" value="TreeGrafter"/>
</dbReference>
<dbReference type="GO" id="GO:0089705">
    <property type="term" value="P:protein localization to outer membrane"/>
    <property type="evidence" value="ECO:0007669"/>
    <property type="project" value="TreeGrafter"/>
</dbReference>
<dbReference type="CDD" id="cd03255">
    <property type="entry name" value="ABC_MJ0796_LolCDE_FtsE"/>
    <property type="match status" value="1"/>
</dbReference>
<dbReference type="FunFam" id="3.40.50.300:FF:000230">
    <property type="entry name" value="Lipoprotein-releasing system ATP-binding protein LolD"/>
    <property type="match status" value="1"/>
</dbReference>
<dbReference type="Gene3D" id="3.40.50.300">
    <property type="entry name" value="P-loop containing nucleotide triphosphate hydrolases"/>
    <property type="match status" value="1"/>
</dbReference>
<dbReference type="InterPro" id="IPR003593">
    <property type="entry name" value="AAA+_ATPase"/>
</dbReference>
<dbReference type="InterPro" id="IPR003439">
    <property type="entry name" value="ABC_transporter-like_ATP-bd"/>
</dbReference>
<dbReference type="InterPro" id="IPR017871">
    <property type="entry name" value="ABC_transporter-like_CS"/>
</dbReference>
<dbReference type="InterPro" id="IPR015854">
    <property type="entry name" value="ABC_transpr_LolD-like"/>
</dbReference>
<dbReference type="InterPro" id="IPR011924">
    <property type="entry name" value="LolD_lipo_ATP-bd"/>
</dbReference>
<dbReference type="InterPro" id="IPR017911">
    <property type="entry name" value="MacB-like_ATP-bd"/>
</dbReference>
<dbReference type="InterPro" id="IPR027417">
    <property type="entry name" value="P-loop_NTPase"/>
</dbReference>
<dbReference type="NCBIfam" id="TIGR02211">
    <property type="entry name" value="LolD_lipo_ex"/>
    <property type="match status" value="1"/>
</dbReference>
<dbReference type="PANTHER" id="PTHR24220">
    <property type="entry name" value="IMPORT ATP-BINDING PROTEIN"/>
    <property type="match status" value="1"/>
</dbReference>
<dbReference type="PANTHER" id="PTHR24220:SF689">
    <property type="entry name" value="LIPOPROTEIN-RELEASING SYSTEM ATP-BINDING PROTEIN LOLD"/>
    <property type="match status" value="1"/>
</dbReference>
<dbReference type="Pfam" id="PF00005">
    <property type="entry name" value="ABC_tran"/>
    <property type="match status" value="1"/>
</dbReference>
<dbReference type="SMART" id="SM00382">
    <property type="entry name" value="AAA"/>
    <property type="match status" value="1"/>
</dbReference>
<dbReference type="SUPFAM" id="SSF52540">
    <property type="entry name" value="P-loop containing nucleoside triphosphate hydrolases"/>
    <property type="match status" value="1"/>
</dbReference>
<dbReference type="PROSITE" id="PS00211">
    <property type="entry name" value="ABC_TRANSPORTER_1"/>
    <property type="match status" value="1"/>
</dbReference>
<dbReference type="PROSITE" id="PS50893">
    <property type="entry name" value="ABC_TRANSPORTER_2"/>
    <property type="match status" value="1"/>
</dbReference>
<dbReference type="PROSITE" id="PS51244">
    <property type="entry name" value="LOLD"/>
    <property type="match status" value="1"/>
</dbReference>